<proteinExistence type="inferred from homology"/>
<reference key="1">
    <citation type="journal article" date="2011" name="MBio">
        <title>Novel metabolic attributes of the genus Cyanothece, comprising a group of unicellular nitrogen-fixing Cyanobacteria.</title>
        <authorList>
            <person name="Bandyopadhyay A."/>
            <person name="Elvitigala T."/>
            <person name="Welsh E."/>
            <person name="Stockel J."/>
            <person name="Liberton M."/>
            <person name="Min H."/>
            <person name="Sherman L.A."/>
            <person name="Pakrasi H.B."/>
        </authorList>
    </citation>
    <scope>NUCLEOTIDE SEQUENCE [LARGE SCALE GENOMIC DNA]</scope>
    <source>
        <strain>PCC 7424</strain>
    </source>
</reference>
<dbReference type="EMBL" id="CP001291">
    <property type="protein sequence ID" value="ACK71185.1"/>
    <property type="molecule type" value="Genomic_DNA"/>
</dbReference>
<dbReference type="RefSeq" id="WP_015954786.1">
    <property type="nucleotide sequence ID" value="NC_011729.1"/>
</dbReference>
<dbReference type="SMR" id="B7K8I7"/>
<dbReference type="STRING" id="65393.PCC7424_2775"/>
<dbReference type="KEGG" id="cyc:PCC7424_2775"/>
<dbReference type="eggNOG" id="COG0217">
    <property type="taxonomic scope" value="Bacteria"/>
</dbReference>
<dbReference type="HOGENOM" id="CLU_062974_3_0_3"/>
<dbReference type="OrthoDB" id="9781053at2"/>
<dbReference type="Proteomes" id="UP000002384">
    <property type="component" value="Chromosome"/>
</dbReference>
<dbReference type="GO" id="GO:0005829">
    <property type="term" value="C:cytosol"/>
    <property type="evidence" value="ECO:0007669"/>
    <property type="project" value="TreeGrafter"/>
</dbReference>
<dbReference type="GO" id="GO:0003677">
    <property type="term" value="F:DNA binding"/>
    <property type="evidence" value="ECO:0007669"/>
    <property type="project" value="UniProtKB-UniRule"/>
</dbReference>
<dbReference type="GO" id="GO:0006355">
    <property type="term" value="P:regulation of DNA-templated transcription"/>
    <property type="evidence" value="ECO:0007669"/>
    <property type="project" value="UniProtKB-UniRule"/>
</dbReference>
<dbReference type="FunFam" id="1.10.10.200:FF:000002">
    <property type="entry name" value="Probable transcriptional regulatory protein CLM62_37755"/>
    <property type="match status" value="1"/>
</dbReference>
<dbReference type="Gene3D" id="1.10.10.200">
    <property type="match status" value="1"/>
</dbReference>
<dbReference type="Gene3D" id="3.30.70.980">
    <property type="match status" value="2"/>
</dbReference>
<dbReference type="HAMAP" id="MF_00693">
    <property type="entry name" value="Transcrip_reg_TACO1"/>
    <property type="match status" value="1"/>
</dbReference>
<dbReference type="InterPro" id="IPR017856">
    <property type="entry name" value="Integrase-like_N"/>
</dbReference>
<dbReference type="InterPro" id="IPR048300">
    <property type="entry name" value="TACO1_YebC-like_2nd/3rd_dom"/>
</dbReference>
<dbReference type="InterPro" id="IPR049083">
    <property type="entry name" value="TACO1_YebC_N"/>
</dbReference>
<dbReference type="InterPro" id="IPR002876">
    <property type="entry name" value="Transcrip_reg_TACO1-like"/>
</dbReference>
<dbReference type="InterPro" id="IPR026564">
    <property type="entry name" value="Transcrip_reg_TACO1-like_dom3"/>
</dbReference>
<dbReference type="InterPro" id="IPR029072">
    <property type="entry name" value="YebC-like"/>
</dbReference>
<dbReference type="NCBIfam" id="NF001030">
    <property type="entry name" value="PRK00110.1"/>
    <property type="match status" value="1"/>
</dbReference>
<dbReference type="NCBIfam" id="NF009044">
    <property type="entry name" value="PRK12378.1"/>
    <property type="match status" value="1"/>
</dbReference>
<dbReference type="NCBIfam" id="TIGR01033">
    <property type="entry name" value="YebC/PmpR family DNA-binding transcriptional regulator"/>
    <property type="match status" value="1"/>
</dbReference>
<dbReference type="PANTHER" id="PTHR12532:SF6">
    <property type="entry name" value="TRANSCRIPTIONAL REGULATORY PROTEIN YEBC-RELATED"/>
    <property type="match status" value="1"/>
</dbReference>
<dbReference type="PANTHER" id="PTHR12532">
    <property type="entry name" value="TRANSLATIONAL ACTIVATOR OF CYTOCHROME C OXIDASE 1"/>
    <property type="match status" value="1"/>
</dbReference>
<dbReference type="Pfam" id="PF20772">
    <property type="entry name" value="TACO1_YebC_N"/>
    <property type="match status" value="1"/>
</dbReference>
<dbReference type="Pfam" id="PF01709">
    <property type="entry name" value="Transcrip_reg"/>
    <property type="match status" value="1"/>
</dbReference>
<dbReference type="SUPFAM" id="SSF75625">
    <property type="entry name" value="YebC-like"/>
    <property type="match status" value="1"/>
</dbReference>
<evidence type="ECO:0000255" key="1">
    <source>
        <dbReference type="HAMAP-Rule" id="MF_00693"/>
    </source>
</evidence>
<organism>
    <name type="scientific">Gloeothece citriformis (strain PCC 7424)</name>
    <name type="common">Cyanothece sp. (strain PCC 7424)</name>
    <dbReference type="NCBI Taxonomy" id="65393"/>
    <lineage>
        <taxon>Bacteria</taxon>
        <taxon>Bacillati</taxon>
        <taxon>Cyanobacteriota</taxon>
        <taxon>Cyanophyceae</taxon>
        <taxon>Oscillatoriophycideae</taxon>
        <taxon>Chroococcales</taxon>
        <taxon>Aphanothecaceae</taxon>
        <taxon>Gloeothece</taxon>
        <taxon>Gloeothece citriformis</taxon>
    </lineage>
</organism>
<accession>B7K8I7</accession>
<keyword id="KW-0963">Cytoplasm</keyword>
<keyword id="KW-0238">DNA-binding</keyword>
<keyword id="KW-1185">Reference proteome</keyword>
<keyword id="KW-0804">Transcription</keyword>
<keyword id="KW-0805">Transcription regulation</keyword>
<protein>
    <recommendedName>
        <fullName evidence="1">Probable transcriptional regulatory protein PCC7424_2775</fullName>
    </recommendedName>
</protein>
<feature type="chain" id="PRO_1000132183" description="Probable transcriptional regulatory protein PCC7424_2775">
    <location>
        <begin position="1"/>
        <end position="255"/>
    </location>
</feature>
<comment type="subcellular location">
    <subcellularLocation>
        <location evidence="1">Cytoplasm</location>
    </subcellularLocation>
</comment>
<comment type="similarity">
    <text evidence="1">Belongs to the TACO1 family.</text>
</comment>
<gene>
    <name type="ordered locus">PCC7424_2775</name>
</gene>
<name>Y2775_GLOC7</name>
<sequence length="255" mass="27633">MAGHSKWANIKRQKARVDAKKGKTFTQLSRAIIVAARNGLPDPAANLQLRTAIEKAKAAGIPNDNIERAIAKGAGTYGNDENNLEEIRYEGYGPGGVAILIEALTDNRNRTAADLRAAFSKNGGNLGETGCVSWMFDQKGVVILEGKVEEEVLLDASVEGGADTYEIFDSDEEQGAEVFTEVSNLETLNQTLQEKGLPVKEAELRWIPNNSIEVTDPEQGRSLLKLMDALESLDDVQNVTANFDMADELIALTIA</sequence>